<sequence>MLLKEYRICMPLTVDEYKIGQLYMISKHSHEQSDRGEGVEVVQNEPFEDPHHGNGQFTEKRVYLNSKLPSWARAVVPKIFYVTEKAWNYYPYTITEYTCSFLPKFSIHIETKYEDNKGSNDSIFDSEAKDLEREVCFIDIACDEIPERYYKESEDPKHFKSEKTGRGQLREGWRDNHQPIMCSYKLVTVKFEVWGLQTRVEQFVHKVVRDILLIGHRQAFAWVDEWYDMTMDEVREFERATQEATNKKIGVFPPAISISSIALLPSSVRSAPSSAPSTPLSTDAPEFLSIPKDRPRKKSAPETLTLPDPEKKATLNLPGVYTSEKPCRPKSE</sequence>
<evidence type="ECO:0000250" key="1">
    <source>
        <dbReference type="UniProtKB" id="Q9UKF7"/>
    </source>
</evidence>
<evidence type="ECO:0000256" key="2">
    <source>
        <dbReference type="SAM" id="MobiDB-lite"/>
    </source>
</evidence>
<evidence type="ECO:0000269" key="3">
    <source>
    </source>
</evidence>
<evidence type="ECO:0000303" key="4">
    <source>
    </source>
</evidence>
<evidence type="ECO:0000303" key="5">
    <source>
    </source>
</evidence>
<evidence type="ECO:0000303" key="6">
    <source>
    </source>
</evidence>
<evidence type="ECO:0000305" key="7"/>
<evidence type="ECO:0007744" key="8">
    <source>
    </source>
</evidence>
<gene>
    <name type="primary">Pitpnc1</name>
</gene>
<accession>Q8K4R4</accession>
<accession>A2A650</accession>
<accession>A2A651</accession>
<accession>Q3TBB3</accession>
<accession>Q3U5F5</accession>
<accession>Q8K4R5</accession>
<name>PITC1_MOUSE</name>
<feature type="chain" id="PRO_0000287531" description="Cytoplasmic phosphatidylinositol transfer protein 1">
    <location>
        <begin position="1"/>
        <end position="332"/>
    </location>
</feature>
<feature type="region of interest" description="Disordered" evidence="2">
    <location>
        <begin position="272"/>
        <end position="332"/>
    </location>
</feature>
<feature type="compositionally biased region" description="Low complexity" evidence="2">
    <location>
        <begin position="272"/>
        <end position="281"/>
    </location>
</feature>
<feature type="modified residue" description="Phosphoserine" evidence="8">
    <location>
        <position position="119"/>
    </location>
</feature>
<feature type="modified residue" description="Phosphoserine" evidence="8">
    <location>
        <position position="122"/>
    </location>
</feature>
<feature type="modified residue" description="Phosphoserine" evidence="8">
    <location>
        <position position="270"/>
    </location>
</feature>
<feature type="modified residue" description="Phosphoserine" evidence="8">
    <location>
        <position position="274"/>
    </location>
</feature>
<feature type="modified residue" description="Phosphothreonine" evidence="8">
    <location>
        <position position="278"/>
    </location>
</feature>
<feature type="splice variant" id="VSP_025546" description="In isoform 4." evidence="6">
    <original>VR</original>
    <variation>GC</variation>
    <location>
        <begin position="208"/>
        <end position="209"/>
    </location>
</feature>
<feature type="splice variant" id="VSP_025547" description="In isoform 4." evidence="6">
    <location>
        <begin position="210"/>
        <end position="332"/>
    </location>
</feature>
<feature type="splice variant" id="VSP_025548" description="In isoform 3." evidence="6">
    <original>DMTMDEV</original>
    <variation>GKSDGPK</variation>
    <location>
        <begin position="228"/>
        <end position="234"/>
    </location>
</feature>
<feature type="splice variant" id="VSP_025549" description="In isoform 2." evidence="4 5">
    <original>EVREFERATQEATNKKIGVFPPAISISSIALLPSSV</original>
    <variation>DVREYEKNMHEQTNIKVCNQHSSTVDDIESHAQTST</variation>
    <location>
        <begin position="233"/>
        <end position="268"/>
    </location>
</feature>
<feature type="splice variant" id="VSP_025550" description="In isoform 3." evidence="6">
    <location>
        <begin position="235"/>
        <end position="332"/>
    </location>
</feature>
<feature type="splice variant" id="VSP_025551" description="In isoform 2." evidence="4 5">
    <location>
        <begin position="269"/>
        <end position="332"/>
    </location>
</feature>
<comment type="function">
    <molecule>Isoform 1</molecule>
    <text evidence="1">Catalyzes the transfer of phosphatidylinositol (PI) and phosphatidic acid (PA) between membranes (By similarity). Binds PA derived from the phospholipase D signaling pathway and among the cellular PA species, preferably binds to the C16:0/16:1 and C16:1/18:1 PA species (By similarity).</text>
</comment>
<comment type="function">
    <molecule>Isoform 2</molecule>
    <text evidence="3">Specifically binds to phosphatidylinositol but not to other phospholipids and may play a role in the phosphoinositide-mediated signaling in the neural development.</text>
</comment>
<comment type="catalytic activity">
    <reaction evidence="1">
        <text>a 1,2-diacyl-sn-glycero-3-phospho-(1D-myo-inositol)(in) = a 1,2-diacyl-sn-glycero-3-phospho-(1D-myo-inositol)(out)</text>
        <dbReference type="Rhea" id="RHEA:38691"/>
        <dbReference type="ChEBI" id="CHEBI:57880"/>
    </reaction>
    <physiologicalReaction direction="left-to-right" evidence="1">
        <dbReference type="Rhea" id="RHEA:38692"/>
    </physiologicalReaction>
</comment>
<comment type="catalytic activity">
    <reaction evidence="1">
        <text>a 1,2-diacyl-sn-glycero-3-phosphate(in) = a 1,2-diacyl-sn-glycero-3-phosphate(out)</text>
        <dbReference type="Rhea" id="RHEA:36435"/>
        <dbReference type="ChEBI" id="CHEBI:58608"/>
    </reaction>
    <physiologicalReaction direction="left-to-right" evidence="1">
        <dbReference type="Rhea" id="RHEA:36436"/>
    </physiologicalReaction>
</comment>
<comment type="subcellular location">
    <molecule>Isoform 1</molecule>
    <subcellularLocation>
        <location evidence="3">Cytoplasm</location>
    </subcellularLocation>
</comment>
<comment type="subcellular location">
    <molecule>Isoform 2</molecule>
    <subcellularLocation>
        <location evidence="3">Cytoplasm</location>
    </subcellularLocation>
    <subcellularLocation>
        <location evidence="3">Nucleus</location>
    </subcellularLocation>
</comment>
<comment type="alternative products">
    <event type="alternative splicing"/>
    <isoform>
        <id>Q8K4R4-1</id>
        <name>1</name>
        <name>mM-rdgBbeta</name>
        <sequence type="displayed"/>
    </isoform>
    <isoform>
        <id>Q8K4R4-2</id>
        <name>2</name>
        <name>mM-rdgBbeta1</name>
        <sequence type="described" ref="VSP_025549 VSP_025551"/>
    </isoform>
    <isoform>
        <id>Q8K4R4-3</id>
        <name>3</name>
        <sequence type="described" ref="VSP_025548 VSP_025550"/>
    </isoform>
    <isoform>
        <id>Q8K4R4-4</id>
        <name>4</name>
        <sequence type="described" ref="VSP_025546 VSP_025547"/>
    </isoform>
</comment>
<comment type="tissue specificity">
    <molecule>Isoform 1</molecule>
    <text evidence="3">Widely expressed in brain, with expression in the gray matters of pre- and postnatal brains.</text>
</comment>
<comment type="tissue specificity">
    <molecule>Isoform 2</molecule>
    <text evidence="3">Weakly expressed in brain and is rather confined to the embryonic stage.</text>
</comment>
<comment type="similarity">
    <text evidence="7">Belongs to the PtdIns transfer protein family. PI transfer class IIB subfamily.</text>
</comment>
<comment type="sequence caution" evidence="7">
    <conflict type="erroneous gene model prediction">
        <sequence resource="EMBL-CDS" id="CAM17314"/>
    </conflict>
</comment>
<comment type="sequence caution" evidence="7">
    <conflict type="erroneous gene model prediction">
        <sequence resource="EMBL-CDS" id="CAM17315"/>
    </conflict>
</comment>
<comment type="sequence caution" evidence="7">
    <conflict type="erroneous gene model prediction">
        <sequence resource="EMBL-CDS" id="CAM20627"/>
    </conflict>
</comment>
<comment type="sequence caution" evidence="7">
    <conflict type="erroneous gene model prediction">
        <sequence resource="EMBL-CDS" id="CAM25441"/>
    </conflict>
</comment>
<comment type="sequence caution" evidence="7">
    <conflict type="erroneous gene model prediction">
        <sequence resource="EMBL-CDS" id="CAM25442"/>
    </conflict>
</comment>
<keyword id="KW-0025">Alternative splicing</keyword>
<keyword id="KW-0963">Cytoplasm</keyword>
<keyword id="KW-0445">Lipid transport</keyword>
<keyword id="KW-0446">Lipid-binding</keyword>
<keyword id="KW-0539">Nucleus</keyword>
<keyword id="KW-0597">Phosphoprotein</keyword>
<keyword id="KW-1185">Reference proteome</keyword>
<keyword id="KW-0813">Transport</keyword>
<reference key="1">
    <citation type="journal article" date="2003" name="J. Neurochem.">
        <title>Cloning and characterization of a novel variant (mM-rdgBbeta1) of mouse M-rdgBs, mammalian homologs of Drosophila retinal degeneration B gene proteins, and its mRNA localization in mouse brain in comparison with other M-rdgBs.</title>
        <authorList>
            <person name="Takano N."/>
            <person name="Owada Y."/>
            <person name="Suzuki R."/>
            <person name="Sakagami H."/>
            <person name="Shimosegawa T."/>
            <person name="Kondo H."/>
        </authorList>
    </citation>
    <scope>NUCLEOTIDE SEQUENCE [MRNA] (ISOFORMS 1 AND 2)</scope>
    <scope>FUNCTION (ISOFORM 2)</scope>
    <scope>SUBCELLULAR LOCATION (ISOFORMS 1 AND 2)</scope>
    <scope>TISSUE SPECIFICITY (ISOFORMS 1 AND 2)</scope>
    <source>
        <strain>C57BL/6J</strain>
        <tissue>Brain</tissue>
    </source>
</reference>
<reference key="2">
    <citation type="journal article" date="2005" name="Science">
        <title>The transcriptional landscape of the mammalian genome.</title>
        <authorList>
            <person name="Carninci P."/>
            <person name="Kasukawa T."/>
            <person name="Katayama S."/>
            <person name="Gough J."/>
            <person name="Frith M.C."/>
            <person name="Maeda N."/>
            <person name="Oyama R."/>
            <person name="Ravasi T."/>
            <person name="Lenhard B."/>
            <person name="Wells C."/>
            <person name="Kodzius R."/>
            <person name="Shimokawa K."/>
            <person name="Bajic V.B."/>
            <person name="Brenner S.E."/>
            <person name="Batalov S."/>
            <person name="Forrest A.R."/>
            <person name="Zavolan M."/>
            <person name="Davis M.J."/>
            <person name="Wilming L.G."/>
            <person name="Aidinis V."/>
            <person name="Allen J.E."/>
            <person name="Ambesi-Impiombato A."/>
            <person name="Apweiler R."/>
            <person name="Aturaliya R.N."/>
            <person name="Bailey T.L."/>
            <person name="Bansal M."/>
            <person name="Baxter L."/>
            <person name="Beisel K.W."/>
            <person name="Bersano T."/>
            <person name="Bono H."/>
            <person name="Chalk A.M."/>
            <person name="Chiu K.P."/>
            <person name="Choudhary V."/>
            <person name="Christoffels A."/>
            <person name="Clutterbuck D.R."/>
            <person name="Crowe M.L."/>
            <person name="Dalla E."/>
            <person name="Dalrymple B.P."/>
            <person name="de Bono B."/>
            <person name="Della Gatta G."/>
            <person name="di Bernardo D."/>
            <person name="Down T."/>
            <person name="Engstrom P."/>
            <person name="Fagiolini M."/>
            <person name="Faulkner G."/>
            <person name="Fletcher C.F."/>
            <person name="Fukushima T."/>
            <person name="Furuno M."/>
            <person name="Futaki S."/>
            <person name="Gariboldi M."/>
            <person name="Georgii-Hemming P."/>
            <person name="Gingeras T.R."/>
            <person name="Gojobori T."/>
            <person name="Green R.E."/>
            <person name="Gustincich S."/>
            <person name="Harbers M."/>
            <person name="Hayashi Y."/>
            <person name="Hensch T.K."/>
            <person name="Hirokawa N."/>
            <person name="Hill D."/>
            <person name="Huminiecki L."/>
            <person name="Iacono M."/>
            <person name="Ikeo K."/>
            <person name="Iwama A."/>
            <person name="Ishikawa T."/>
            <person name="Jakt M."/>
            <person name="Kanapin A."/>
            <person name="Katoh M."/>
            <person name="Kawasawa Y."/>
            <person name="Kelso J."/>
            <person name="Kitamura H."/>
            <person name="Kitano H."/>
            <person name="Kollias G."/>
            <person name="Krishnan S.P."/>
            <person name="Kruger A."/>
            <person name="Kummerfeld S.K."/>
            <person name="Kurochkin I.V."/>
            <person name="Lareau L.F."/>
            <person name="Lazarevic D."/>
            <person name="Lipovich L."/>
            <person name="Liu J."/>
            <person name="Liuni S."/>
            <person name="McWilliam S."/>
            <person name="Madan Babu M."/>
            <person name="Madera M."/>
            <person name="Marchionni L."/>
            <person name="Matsuda H."/>
            <person name="Matsuzawa S."/>
            <person name="Miki H."/>
            <person name="Mignone F."/>
            <person name="Miyake S."/>
            <person name="Morris K."/>
            <person name="Mottagui-Tabar S."/>
            <person name="Mulder N."/>
            <person name="Nakano N."/>
            <person name="Nakauchi H."/>
            <person name="Ng P."/>
            <person name="Nilsson R."/>
            <person name="Nishiguchi S."/>
            <person name="Nishikawa S."/>
            <person name="Nori F."/>
            <person name="Ohara O."/>
            <person name="Okazaki Y."/>
            <person name="Orlando V."/>
            <person name="Pang K.C."/>
            <person name="Pavan W.J."/>
            <person name="Pavesi G."/>
            <person name="Pesole G."/>
            <person name="Petrovsky N."/>
            <person name="Piazza S."/>
            <person name="Reed J."/>
            <person name="Reid J.F."/>
            <person name="Ring B.Z."/>
            <person name="Ringwald M."/>
            <person name="Rost B."/>
            <person name="Ruan Y."/>
            <person name="Salzberg S.L."/>
            <person name="Sandelin A."/>
            <person name="Schneider C."/>
            <person name="Schoenbach C."/>
            <person name="Sekiguchi K."/>
            <person name="Semple C.A."/>
            <person name="Seno S."/>
            <person name="Sessa L."/>
            <person name="Sheng Y."/>
            <person name="Shibata Y."/>
            <person name="Shimada H."/>
            <person name="Shimada K."/>
            <person name="Silva D."/>
            <person name="Sinclair B."/>
            <person name="Sperling S."/>
            <person name="Stupka E."/>
            <person name="Sugiura K."/>
            <person name="Sultana R."/>
            <person name="Takenaka Y."/>
            <person name="Taki K."/>
            <person name="Tammoja K."/>
            <person name="Tan S.L."/>
            <person name="Tang S."/>
            <person name="Taylor M.S."/>
            <person name="Tegner J."/>
            <person name="Teichmann S.A."/>
            <person name="Ueda H.R."/>
            <person name="van Nimwegen E."/>
            <person name="Verardo R."/>
            <person name="Wei C.L."/>
            <person name="Yagi K."/>
            <person name="Yamanishi H."/>
            <person name="Zabarovsky E."/>
            <person name="Zhu S."/>
            <person name="Zimmer A."/>
            <person name="Hide W."/>
            <person name="Bult C."/>
            <person name="Grimmond S.M."/>
            <person name="Teasdale R.D."/>
            <person name="Liu E.T."/>
            <person name="Brusic V."/>
            <person name="Quackenbush J."/>
            <person name="Wahlestedt C."/>
            <person name="Mattick J.S."/>
            <person name="Hume D.A."/>
            <person name="Kai C."/>
            <person name="Sasaki D."/>
            <person name="Tomaru Y."/>
            <person name="Fukuda S."/>
            <person name="Kanamori-Katayama M."/>
            <person name="Suzuki M."/>
            <person name="Aoki J."/>
            <person name="Arakawa T."/>
            <person name="Iida J."/>
            <person name="Imamura K."/>
            <person name="Itoh M."/>
            <person name="Kato T."/>
            <person name="Kawaji H."/>
            <person name="Kawagashira N."/>
            <person name="Kawashima T."/>
            <person name="Kojima M."/>
            <person name="Kondo S."/>
            <person name="Konno H."/>
            <person name="Nakano K."/>
            <person name="Ninomiya N."/>
            <person name="Nishio T."/>
            <person name="Okada M."/>
            <person name="Plessy C."/>
            <person name="Shibata K."/>
            <person name="Shiraki T."/>
            <person name="Suzuki S."/>
            <person name="Tagami M."/>
            <person name="Waki K."/>
            <person name="Watahiki A."/>
            <person name="Okamura-Oho Y."/>
            <person name="Suzuki H."/>
            <person name="Kawai J."/>
            <person name="Hayashizaki Y."/>
        </authorList>
    </citation>
    <scope>NUCLEOTIDE SEQUENCE [LARGE SCALE MRNA] (ISOFORMS 3 AND 4)</scope>
    <source>
        <strain>C57BL/6J</strain>
        <tissue>Thymus</tissue>
    </source>
</reference>
<reference key="3">
    <citation type="journal article" date="2009" name="PLoS Biol.">
        <title>Lineage-specific biology revealed by a finished genome assembly of the mouse.</title>
        <authorList>
            <person name="Church D.M."/>
            <person name="Goodstadt L."/>
            <person name="Hillier L.W."/>
            <person name="Zody M.C."/>
            <person name="Goldstein S."/>
            <person name="She X."/>
            <person name="Bult C.J."/>
            <person name="Agarwala R."/>
            <person name="Cherry J.L."/>
            <person name="DiCuccio M."/>
            <person name="Hlavina W."/>
            <person name="Kapustin Y."/>
            <person name="Meric P."/>
            <person name="Maglott D."/>
            <person name="Birtle Z."/>
            <person name="Marques A.C."/>
            <person name="Graves T."/>
            <person name="Zhou S."/>
            <person name="Teague B."/>
            <person name="Potamousis K."/>
            <person name="Churas C."/>
            <person name="Place M."/>
            <person name="Herschleb J."/>
            <person name="Runnheim R."/>
            <person name="Forrest D."/>
            <person name="Amos-Landgraf J."/>
            <person name="Schwartz D.C."/>
            <person name="Cheng Z."/>
            <person name="Lindblad-Toh K."/>
            <person name="Eichler E.E."/>
            <person name="Ponting C.P."/>
        </authorList>
    </citation>
    <scope>NUCLEOTIDE SEQUENCE [LARGE SCALE GENOMIC DNA]</scope>
    <source>
        <strain>C57BL/6J</strain>
    </source>
</reference>
<reference key="4">
    <citation type="journal article" date="2004" name="Genome Res.">
        <title>The status, quality, and expansion of the NIH full-length cDNA project: the Mammalian Gene Collection (MGC).</title>
        <authorList>
            <consortium name="The MGC Project Team"/>
        </authorList>
    </citation>
    <scope>NUCLEOTIDE SEQUENCE [LARGE SCALE MRNA] (ISOFORM 2)</scope>
    <source>
        <tissue>Olfactory epithelium</tissue>
    </source>
</reference>
<reference key="5">
    <citation type="journal article" date="2004" name="Mol. Cell. Proteomics">
        <title>Phosphoproteomic analysis of the developing mouse brain.</title>
        <authorList>
            <person name="Ballif B.A."/>
            <person name="Villen J."/>
            <person name="Beausoleil S.A."/>
            <person name="Schwartz D."/>
            <person name="Gygi S.P."/>
        </authorList>
    </citation>
    <scope>IDENTIFICATION BY MASS SPECTROMETRY [LARGE SCALE ANALYSIS]</scope>
    <source>
        <tissue>Embryonic brain</tissue>
    </source>
</reference>
<reference key="6">
    <citation type="journal article" date="2010" name="Cell">
        <title>A tissue-specific atlas of mouse protein phosphorylation and expression.</title>
        <authorList>
            <person name="Huttlin E.L."/>
            <person name="Jedrychowski M.P."/>
            <person name="Elias J.E."/>
            <person name="Goswami T."/>
            <person name="Rad R."/>
            <person name="Beausoleil S.A."/>
            <person name="Villen J."/>
            <person name="Haas W."/>
            <person name="Sowa M.E."/>
            <person name="Gygi S.P."/>
        </authorList>
    </citation>
    <scope>PHOSPHORYLATION [LARGE SCALE ANALYSIS] AT SER-119; SER-122; SER-270; SER-274 AND THR-278</scope>
    <scope>IDENTIFICATION BY MASS SPECTROMETRY [LARGE SCALE ANALYSIS]</scope>
    <source>
        <tissue>Brain</tissue>
        <tissue>Heart</tissue>
        <tissue>Lung</tissue>
        <tissue>Spleen</tissue>
    </source>
</reference>
<organism>
    <name type="scientific">Mus musculus</name>
    <name type="common">Mouse</name>
    <dbReference type="NCBI Taxonomy" id="10090"/>
    <lineage>
        <taxon>Eukaryota</taxon>
        <taxon>Metazoa</taxon>
        <taxon>Chordata</taxon>
        <taxon>Craniata</taxon>
        <taxon>Vertebrata</taxon>
        <taxon>Euteleostomi</taxon>
        <taxon>Mammalia</taxon>
        <taxon>Eutheria</taxon>
        <taxon>Euarchontoglires</taxon>
        <taxon>Glires</taxon>
        <taxon>Rodentia</taxon>
        <taxon>Myomorpha</taxon>
        <taxon>Muroidea</taxon>
        <taxon>Muridae</taxon>
        <taxon>Murinae</taxon>
        <taxon>Mus</taxon>
        <taxon>Mus</taxon>
    </lineage>
</organism>
<proteinExistence type="evidence at protein level"/>
<dbReference type="EMBL" id="AB077281">
    <property type="protein sequence ID" value="BAC02913.1"/>
    <property type="molecule type" value="mRNA"/>
</dbReference>
<dbReference type="EMBL" id="AB077282">
    <property type="protein sequence ID" value="BAC02914.1"/>
    <property type="molecule type" value="mRNA"/>
</dbReference>
<dbReference type="EMBL" id="AK153625">
    <property type="protein sequence ID" value="BAE32124.1"/>
    <property type="molecule type" value="mRNA"/>
</dbReference>
<dbReference type="EMBL" id="AK171340">
    <property type="protein sequence ID" value="BAE42401.1"/>
    <property type="molecule type" value="mRNA"/>
</dbReference>
<dbReference type="EMBL" id="AL596116">
    <property type="protein sequence ID" value="CAM20633.1"/>
    <property type="molecule type" value="Genomic_DNA"/>
</dbReference>
<dbReference type="EMBL" id="AL645687">
    <property type="protein sequence ID" value="CAM20633.1"/>
    <property type="status" value="JOINED"/>
    <property type="molecule type" value="Genomic_DNA"/>
</dbReference>
<dbReference type="EMBL" id="AL645905">
    <property type="protein sequence ID" value="CAM20633.1"/>
    <property type="status" value="JOINED"/>
    <property type="molecule type" value="Genomic_DNA"/>
</dbReference>
<dbReference type="EMBL" id="AL596116">
    <property type="protein sequence ID" value="CAM20627.1"/>
    <property type="status" value="ALT_SEQ"/>
    <property type="molecule type" value="Genomic_DNA"/>
</dbReference>
<dbReference type="EMBL" id="AL645687">
    <property type="protein sequence ID" value="CAM20627.1"/>
    <property type="status" value="JOINED"/>
    <property type="molecule type" value="Genomic_DNA"/>
</dbReference>
<dbReference type="EMBL" id="AL645905">
    <property type="protein sequence ID" value="CAM20627.1"/>
    <property type="status" value="JOINED"/>
    <property type="molecule type" value="Genomic_DNA"/>
</dbReference>
<dbReference type="EMBL" id="AL596116">
    <property type="protein sequence ID" value="CAM20628.1"/>
    <property type="molecule type" value="Genomic_DNA"/>
</dbReference>
<dbReference type="EMBL" id="AL645687">
    <property type="protein sequence ID" value="CAM20628.1"/>
    <property type="status" value="JOINED"/>
    <property type="molecule type" value="Genomic_DNA"/>
</dbReference>
<dbReference type="EMBL" id="AL645905">
    <property type="protein sequence ID" value="CAM20628.1"/>
    <property type="status" value="JOINED"/>
    <property type="molecule type" value="Genomic_DNA"/>
</dbReference>
<dbReference type="EMBL" id="AL645687">
    <property type="protein sequence ID" value="CAM25441.1"/>
    <property type="status" value="ALT_SEQ"/>
    <property type="molecule type" value="Genomic_DNA"/>
</dbReference>
<dbReference type="EMBL" id="AL596116">
    <property type="protein sequence ID" value="CAM25441.1"/>
    <property type="status" value="JOINED"/>
    <property type="molecule type" value="Genomic_DNA"/>
</dbReference>
<dbReference type="EMBL" id="AL645905">
    <property type="protein sequence ID" value="CAM25441.1"/>
    <property type="status" value="JOINED"/>
    <property type="molecule type" value="Genomic_DNA"/>
</dbReference>
<dbReference type="EMBL" id="AL645687">
    <property type="protein sequence ID" value="CAM25442.1"/>
    <property type="status" value="ALT_SEQ"/>
    <property type="molecule type" value="Genomic_DNA"/>
</dbReference>
<dbReference type="EMBL" id="AL596116">
    <property type="protein sequence ID" value="CAM25442.1"/>
    <property type="status" value="JOINED"/>
    <property type="molecule type" value="Genomic_DNA"/>
</dbReference>
<dbReference type="EMBL" id="AL645905">
    <property type="protein sequence ID" value="CAM25442.1"/>
    <property type="status" value="JOINED"/>
    <property type="molecule type" value="Genomic_DNA"/>
</dbReference>
<dbReference type="EMBL" id="AL645687">
    <property type="protein sequence ID" value="CAM25443.1"/>
    <property type="molecule type" value="Genomic_DNA"/>
</dbReference>
<dbReference type="EMBL" id="AL596116">
    <property type="protein sequence ID" value="CAM25443.1"/>
    <property type="status" value="JOINED"/>
    <property type="molecule type" value="Genomic_DNA"/>
</dbReference>
<dbReference type="EMBL" id="AL645905">
    <property type="protein sequence ID" value="CAM25443.1"/>
    <property type="status" value="JOINED"/>
    <property type="molecule type" value="Genomic_DNA"/>
</dbReference>
<dbReference type="EMBL" id="AL645905">
    <property type="protein sequence ID" value="CAM17314.1"/>
    <property type="status" value="ALT_SEQ"/>
    <property type="molecule type" value="Genomic_DNA"/>
</dbReference>
<dbReference type="EMBL" id="AL596116">
    <property type="protein sequence ID" value="CAM17314.1"/>
    <property type="status" value="JOINED"/>
    <property type="molecule type" value="Genomic_DNA"/>
</dbReference>
<dbReference type="EMBL" id="AL645687">
    <property type="protein sequence ID" value="CAM17314.1"/>
    <property type="status" value="JOINED"/>
    <property type="molecule type" value="Genomic_DNA"/>
</dbReference>
<dbReference type="EMBL" id="AL645905">
    <property type="protein sequence ID" value="CAM17315.1"/>
    <property type="status" value="ALT_SEQ"/>
    <property type="molecule type" value="Genomic_DNA"/>
</dbReference>
<dbReference type="EMBL" id="AL596116">
    <property type="protein sequence ID" value="CAM17315.1"/>
    <property type="status" value="JOINED"/>
    <property type="molecule type" value="Genomic_DNA"/>
</dbReference>
<dbReference type="EMBL" id="AL645687">
    <property type="protein sequence ID" value="CAM17315.1"/>
    <property type="status" value="JOINED"/>
    <property type="molecule type" value="Genomic_DNA"/>
</dbReference>
<dbReference type="EMBL" id="AL645905">
    <property type="protein sequence ID" value="CAM17317.1"/>
    <property type="molecule type" value="Genomic_DNA"/>
</dbReference>
<dbReference type="EMBL" id="AL596116">
    <property type="protein sequence ID" value="CAM17317.1"/>
    <property type="status" value="JOINED"/>
    <property type="molecule type" value="Genomic_DNA"/>
</dbReference>
<dbReference type="EMBL" id="AL645687">
    <property type="protein sequence ID" value="CAM17317.1"/>
    <property type="status" value="JOINED"/>
    <property type="molecule type" value="Genomic_DNA"/>
</dbReference>
<dbReference type="EMBL" id="BC108351">
    <property type="protein sequence ID" value="AAI08352.1"/>
    <property type="molecule type" value="mRNA"/>
</dbReference>
<dbReference type="CCDS" id="CCDS25567.1">
    <molecule id="Q8K4R4-2"/>
</dbReference>
<dbReference type="RefSeq" id="NP_001346545.1">
    <molecule id="Q8K4R4-1"/>
    <property type="nucleotide sequence ID" value="NM_001359616.1"/>
</dbReference>
<dbReference type="RefSeq" id="NP_665822.1">
    <molecule id="Q8K4R4-2"/>
    <property type="nucleotide sequence ID" value="NM_145823.2"/>
</dbReference>
<dbReference type="RefSeq" id="XP_006534325.1">
    <property type="nucleotide sequence ID" value="XM_006534262.3"/>
</dbReference>
<dbReference type="SMR" id="Q8K4R4"/>
<dbReference type="FunCoup" id="Q8K4R4">
    <property type="interactions" value="3180"/>
</dbReference>
<dbReference type="STRING" id="10090.ENSMUSP00000099353"/>
<dbReference type="iPTMnet" id="Q8K4R4"/>
<dbReference type="PhosphoSitePlus" id="Q8K4R4"/>
<dbReference type="SwissPalm" id="Q8K4R4"/>
<dbReference type="jPOST" id="Q8K4R4"/>
<dbReference type="PaxDb" id="10090-ENSMUSP00000099353"/>
<dbReference type="PeptideAtlas" id="Q8K4R4"/>
<dbReference type="ProteomicsDB" id="289427">
    <molecule id="Q8K4R4-1"/>
</dbReference>
<dbReference type="ProteomicsDB" id="289428">
    <molecule id="Q8K4R4-2"/>
</dbReference>
<dbReference type="ProteomicsDB" id="289429">
    <molecule id="Q8K4R4-3"/>
</dbReference>
<dbReference type="ProteomicsDB" id="289430">
    <molecule id="Q8K4R4-4"/>
</dbReference>
<dbReference type="Pumba" id="Q8K4R4"/>
<dbReference type="Antibodypedia" id="9639">
    <property type="antibodies" value="72 antibodies from 16 providers"/>
</dbReference>
<dbReference type="DNASU" id="71795"/>
<dbReference type="Ensembl" id="ENSMUST00000103064.10">
    <molecule id="Q8K4R4-2"/>
    <property type="protein sequence ID" value="ENSMUSP00000099353.4"/>
    <property type="gene ID" value="ENSMUSG00000040430.19"/>
</dbReference>
<dbReference type="GeneID" id="71795"/>
<dbReference type="KEGG" id="mmu:71795"/>
<dbReference type="UCSC" id="uc007mak.1">
    <molecule id="Q8K4R4-1"/>
    <property type="organism name" value="mouse"/>
</dbReference>
<dbReference type="UCSC" id="uc007mal.1">
    <molecule id="Q8K4R4-2"/>
    <property type="organism name" value="mouse"/>
</dbReference>
<dbReference type="UCSC" id="uc007man.1">
    <molecule id="Q8K4R4-3"/>
    <property type="organism name" value="mouse"/>
</dbReference>
<dbReference type="UCSC" id="uc007mao.1">
    <molecule id="Q8K4R4-4"/>
    <property type="organism name" value="mouse"/>
</dbReference>
<dbReference type="AGR" id="MGI:1919045"/>
<dbReference type="CTD" id="26207"/>
<dbReference type="MGI" id="MGI:1919045">
    <property type="gene designation" value="Pitpnc1"/>
</dbReference>
<dbReference type="VEuPathDB" id="HostDB:ENSMUSG00000040430"/>
<dbReference type="eggNOG" id="KOG3668">
    <property type="taxonomic scope" value="Eukaryota"/>
</dbReference>
<dbReference type="GeneTree" id="ENSGT00940000160720"/>
<dbReference type="HOGENOM" id="CLU_046509_3_0_1"/>
<dbReference type="InParanoid" id="Q8K4R4"/>
<dbReference type="OMA" id="VENRPCE"/>
<dbReference type="OrthoDB" id="18453at2759"/>
<dbReference type="TreeFam" id="TF313279"/>
<dbReference type="BioGRID-ORCS" id="71795">
    <property type="hits" value="1 hit in 80 CRISPR screens"/>
</dbReference>
<dbReference type="ChiTaRS" id="Pitpnc1">
    <property type="organism name" value="mouse"/>
</dbReference>
<dbReference type="PRO" id="PR:Q8K4R4"/>
<dbReference type="Proteomes" id="UP000000589">
    <property type="component" value="Chromosome 11"/>
</dbReference>
<dbReference type="RNAct" id="Q8K4R4">
    <property type="molecule type" value="protein"/>
</dbReference>
<dbReference type="Bgee" id="ENSMUSG00000040430">
    <property type="expression patterns" value="Expressed in lateral geniculate body and 273 other cell types or tissues"/>
</dbReference>
<dbReference type="ExpressionAtlas" id="Q8K4R4">
    <property type="expression patterns" value="baseline and differential"/>
</dbReference>
<dbReference type="GO" id="GO:0005737">
    <property type="term" value="C:cytoplasm"/>
    <property type="evidence" value="ECO:0000314"/>
    <property type="project" value="UniProtKB"/>
</dbReference>
<dbReference type="GO" id="GO:0005634">
    <property type="term" value="C:nucleus"/>
    <property type="evidence" value="ECO:0000314"/>
    <property type="project" value="UniProtKB"/>
</dbReference>
<dbReference type="GO" id="GO:0008289">
    <property type="term" value="F:lipid binding"/>
    <property type="evidence" value="ECO:0007669"/>
    <property type="project" value="UniProtKB-KW"/>
</dbReference>
<dbReference type="GO" id="GO:1990050">
    <property type="term" value="F:phosphatidic acid transfer activity"/>
    <property type="evidence" value="ECO:0000250"/>
    <property type="project" value="UniProtKB"/>
</dbReference>
<dbReference type="GO" id="GO:0035091">
    <property type="term" value="F:phosphatidylinositol binding"/>
    <property type="evidence" value="ECO:0000314"/>
    <property type="project" value="UniProtKB"/>
</dbReference>
<dbReference type="GO" id="GO:0008526">
    <property type="term" value="F:phosphatidylinositol transfer activity"/>
    <property type="evidence" value="ECO:0000250"/>
    <property type="project" value="UniProtKB"/>
</dbReference>
<dbReference type="GO" id="GO:0046488">
    <property type="term" value="P:phosphatidylinositol metabolic process"/>
    <property type="evidence" value="ECO:0000266"/>
    <property type="project" value="MGI"/>
</dbReference>
<dbReference type="GO" id="GO:0007165">
    <property type="term" value="P:signal transduction"/>
    <property type="evidence" value="ECO:0000250"/>
    <property type="project" value="UniProtKB"/>
</dbReference>
<dbReference type="CDD" id="cd08890">
    <property type="entry name" value="SRPBCC_PITPNC1_like"/>
    <property type="match status" value="1"/>
</dbReference>
<dbReference type="FunFam" id="3.30.530.20:FF:000011">
    <property type="entry name" value="cytoplasmic phosphatidylinositol transfer protein 1 isoform X2"/>
    <property type="match status" value="1"/>
</dbReference>
<dbReference type="Gene3D" id="3.30.530.20">
    <property type="match status" value="1"/>
</dbReference>
<dbReference type="InterPro" id="IPR001666">
    <property type="entry name" value="PI_transfer"/>
</dbReference>
<dbReference type="InterPro" id="IPR055261">
    <property type="entry name" value="PI_transfer_N"/>
</dbReference>
<dbReference type="InterPro" id="IPR023393">
    <property type="entry name" value="START-like_dom_sf"/>
</dbReference>
<dbReference type="PANTHER" id="PTHR10658:SF55">
    <property type="entry name" value="CYTOPLASMIC PHOSPHATIDYLINOSITOL TRANSFER PROTEIN 1"/>
    <property type="match status" value="1"/>
</dbReference>
<dbReference type="PANTHER" id="PTHR10658">
    <property type="entry name" value="PHOSPHATIDYLINOSITOL TRANSFER PROTEIN"/>
    <property type="match status" value="1"/>
</dbReference>
<dbReference type="Pfam" id="PF02121">
    <property type="entry name" value="IP_trans"/>
    <property type="match status" value="1"/>
</dbReference>
<dbReference type="PRINTS" id="PR00391">
    <property type="entry name" value="PITRANSFER"/>
</dbReference>
<dbReference type="SUPFAM" id="SSF55961">
    <property type="entry name" value="Bet v1-like"/>
    <property type="match status" value="1"/>
</dbReference>
<protein>
    <recommendedName>
        <fullName>Cytoplasmic phosphatidylinositol transfer protein 1</fullName>
    </recommendedName>
    <alternativeName>
        <fullName>Mammalian rdgB homolog beta</fullName>
        <shortName>M-rdgB beta</shortName>
        <shortName>MrdgBbeta</shortName>
        <shortName>mM-rdgBbeta</shortName>
    </alternativeName>
    <alternativeName>
        <fullName>Retinal degeneration B homolog beta</fullName>
        <shortName>RdgBbeta</shortName>
    </alternativeName>
</protein>